<dbReference type="PIR" id="H61587">
    <property type="entry name" value="H61587"/>
</dbReference>
<dbReference type="SMR" id="P68391"/>
<dbReference type="GO" id="GO:0005576">
    <property type="term" value="C:extracellular region"/>
    <property type="evidence" value="ECO:0007669"/>
    <property type="project" value="UniProtKB-SubCell"/>
</dbReference>
<dbReference type="GO" id="GO:0004867">
    <property type="term" value="F:serine-type endopeptidase inhibitor activity"/>
    <property type="evidence" value="ECO:0007669"/>
    <property type="project" value="UniProtKB-KW"/>
</dbReference>
<dbReference type="CDD" id="cd00104">
    <property type="entry name" value="KAZAL_FS"/>
    <property type="match status" value="1"/>
</dbReference>
<dbReference type="FunFam" id="3.30.60.30:FF:000037">
    <property type="entry name" value="Ovomucoid"/>
    <property type="match status" value="1"/>
</dbReference>
<dbReference type="Gene3D" id="3.30.60.30">
    <property type="match status" value="1"/>
</dbReference>
<dbReference type="InterPro" id="IPR051597">
    <property type="entry name" value="Bifunctional_prot_inhibitor"/>
</dbReference>
<dbReference type="InterPro" id="IPR002350">
    <property type="entry name" value="Kazal_dom"/>
</dbReference>
<dbReference type="InterPro" id="IPR036058">
    <property type="entry name" value="Kazal_dom_sf"/>
</dbReference>
<dbReference type="InterPro" id="IPR001239">
    <property type="entry name" value="Prot_inh_Kazal-m"/>
</dbReference>
<dbReference type="PANTHER" id="PTHR47729:SF1">
    <property type="entry name" value="OVOMUCOID-LIKE-RELATED"/>
    <property type="match status" value="1"/>
</dbReference>
<dbReference type="PANTHER" id="PTHR47729">
    <property type="entry name" value="SERINE PEPTIDASE INHIBITOR, KAZAL TYPE 2, TANDEM DUPLICATE 1-RELATED"/>
    <property type="match status" value="1"/>
</dbReference>
<dbReference type="Pfam" id="PF00050">
    <property type="entry name" value="Kazal_1"/>
    <property type="match status" value="1"/>
</dbReference>
<dbReference type="PRINTS" id="PR00290">
    <property type="entry name" value="KAZALINHBTR"/>
</dbReference>
<dbReference type="SMART" id="SM00280">
    <property type="entry name" value="KAZAL"/>
    <property type="match status" value="1"/>
</dbReference>
<dbReference type="SUPFAM" id="SSF100895">
    <property type="entry name" value="Kazal-type serine protease inhibitors"/>
    <property type="match status" value="1"/>
</dbReference>
<dbReference type="PROSITE" id="PS00282">
    <property type="entry name" value="KAZAL_1"/>
    <property type="match status" value="1"/>
</dbReference>
<dbReference type="PROSITE" id="PS51465">
    <property type="entry name" value="KAZAL_2"/>
    <property type="match status" value="1"/>
</dbReference>
<reference key="1">
    <citation type="journal article" date="1993" name="J. Protein Chem.">
        <title>Amino acid sequences of ovomucoid third domains from 27 additional species of birds.</title>
        <authorList>
            <person name="Apostol I."/>
            <person name="Giletto A."/>
            <person name="Komiyama T."/>
            <person name="Zhang W."/>
            <person name="Laskowski M. Jr."/>
        </authorList>
    </citation>
    <scope>PROTEIN SEQUENCE</scope>
</reference>
<sequence>VATVNCSGYPKPACTMEYMPLCGSDNKTYGNKCNFCNAVVDSNGTLTLSHFGEC</sequence>
<protein>
    <recommendedName>
        <fullName>Ovomucoid</fullName>
    </recommendedName>
</protein>
<feature type="chain" id="PRO_0000073066" description="Ovomucoid">
    <location>
        <begin position="1" status="less than"/>
        <end position="54" status="greater than"/>
    </location>
</feature>
<feature type="domain" description="Kazal-like" evidence="2">
    <location>
        <begin position="4"/>
        <end position="54"/>
    </location>
</feature>
<feature type="site" description="Reactive bond 3">
    <location>
        <begin position="16"/>
        <end position="17"/>
    </location>
</feature>
<feature type="glycosylation site" description="N-linked (GlcNAc...) asparagine" evidence="1">
    <location>
        <position position="43"/>
    </location>
</feature>
<feature type="disulfide bond">
    <location>
        <begin position="6"/>
        <end position="36"/>
    </location>
</feature>
<feature type="disulfide bond">
    <location>
        <begin position="14"/>
        <end position="33"/>
    </location>
</feature>
<feature type="disulfide bond">
    <location>
        <begin position="22"/>
        <end position="54"/>
    </location>
</feature>
<feature type="non-terminal residue">
    <location>
        <position position="1"/>
    </location>
</feature>
<feature type="non-terminal residue">
    <location>
        <position position="54"/>
    </location>
</feature>
<name>IOVO_AYTAM</name>
<accession>P68391</accession>
<accession>P52238</accession>
<proteinExistence type="evidence at protein level"/>
<organism>
    <name type="scientific">Aythya americana</name>
    <name type="common">Redhead</name>
    <dbReference type="NCBI Taxonomy" id="30385"/>
    <lineage>
        <taxon>Eukaryota</taxon>
        <taxon>Metazoa</taxon>
        <taxon>Chordata</taxon>
        <taxon>Craniata</taxon>
        <taxon>Vertebrata</taxon>
        <taxon>Euteleostomi</taxon>
        <taxon>Archelosauria</taxon>
        <taxon>Archosauria</taxon>
        <taxon>Dinosauria</taxon>
        <taxon>Saurischia</taxon>
        <taxon>Theropoda</taxon>
        <taxon>Coelurosauria</taxon>
        <taxon>Aves</taxon>
        <taxon>Neognathae</taxon>
        <taxon>Galloanserae</taxon>
        <taxon>Anseriformes</taxon>
        <taxon>Anatidae</taxon>
        <taxon>Aythyinae</taxon>
        <taxon>Aythya</taxon>
    </lineage>
</organism>
<comment type="subcellular location">
    <subcellularLocation>
        <location>Secreted</location>
    </subcellularLocation>
</comment>
<comment type="domain">
    <text>Avian ovomucoid consists of three homologous, tandem Kazal family inhibitory domains.</text>
</comment>
<evidence type="ECO:0000255" key="1"/>
<evidence type="ECO:0000255" key="2">
    <source>
        <dbReference type="PROSITE-ProRule" id="PRU00798"/>
    </source>
</evidence>
<keyword id="KW-0903">Direct protein sequencing</keyword>
<keyword id="KW-1015">Disulfide bond</keyword>
<keyword id="KW-0325">Glycoprotein</keyword>
<keyword id="KW-0646">Protease inhibitor</keyword>
<keyword id="KW-0677">Repeat</keyword>
<keyword id="KW-0964">Secreted</keyword>
<keyword id="KW-0722">Serine protease inhibitor</keyword>